<name>CREEH_STRDJ</name>
<accession>K4QXN8</accession>
<protein>
    <recommendedName>
        <fullName evidence="2">L-aspartate N-monooxygenase (nitrosuccinate-forming)</fullName>
        <ecNumber evidence="1">1.14.13.248</ecNumber>
    </recommendedName>
</protein>
<gene>
    <name evidence="3" type="ORF">BN159_4422</name>
</gene>
<comment type="function">
    <text evidence="1">Involved in the biosynthesis of desferrioxamine derivatives which have iron-binding properties and may act as siderophores (PubMed:30120394). Catalyzes the iterative oxidation of L-aspartic acid to nitrosuccinic acid (2-nitrobutanedioate) via N-hydroxyaspartic acid and nitrososuccinic acid (PubMed:30120394).</text>
</comment>
<comment type="catalytic activity">
    <reaction evidence="1">
        <text>L-aspartate + 3 NADPH + 3 O2 + 2 H(+) = 2-nitrobutanedioate + 3 NADP(+) + 4 H2O</text>
        <dbReference type="Rhea" id="RHEA:69008"/>
        <dbReference type="ChEBI" id="CHEBI:15377"/>
        <dbReference type="ChEBI" id="CHEBI:15378"/>
        <dbReference type="ChEBI" id="CHEBI:15379"/>
        <dbReference type="ChEBI" id="CHEBI:29991"/>
        <dbReference type="ChEBI" id="CHEBI:57783"/>
        <dbReference type="ChEBI" id="CHEBI:58349"/>
        <dbReference type="ChEBI" id="CHEBI:180682"/>
        <dbReference type="EC" id="1.14.13.248"/>
    </reaction>
</comment>
<comment type="cofactor">
    <cofactor evidence="1">
        <name>FAD</name>
        <dbReference type="ChEBI" id="CHEBI:57692"/>
    </cofactor>
</comment>
<comment type="similarity">
    <text evidence="2">Belongs to the nitrosuccinic acid synthase family.</text>
</comment>
<organism>
    <name type="scientific">Streptomyces davaonensis (strain DSM 101723 / JCM 4913 / KCC S-0913 / 768)</name>
    <dbReference type="NCBI Taxonomy" id="1214101"/>
    <lineage>
        <taxon>Bacteria</taxon>
        <taxon>Bacillati</taxon>
        <taxon>Actinomycetota</taxon>
        <taxon>Actinomycetes</taxon>
        <taxon>Kitasatosporales</taxon>
        <taxon>Streptomycetaceae</taxon>
        <taxon>Streptomyces</taxon>
    </lineage>
</organism>
<feature type="chain" id="PRO_0000457470" description="L-aspartate N-monooxygenase (nitrosuccinate-forming)">
    <location>
        <begin position="1"/>
        <end position="650"/>
    </location>
</feature>
<proteinExistence type="evidence at protein level"/>
<evidence type="ECO:0000269" key="1">
    <source>
    </source>
</evidence>
<evidence type="ECO:0000305" key="2"/>
<evidence type="ECO:0000312" key="3">
    <source>
        <dbReference type="EMBL" id="CCK28801.1"/>
    </source>
</evidence>
<reference key="1">
    <citation type="journal article" date="2012" name="J. Bacteriol.">
        <title>Genome sequence of the bacterium Streptomyces davawensis JCM 4913 and heterologous production of the unique antibiotic roseoflavin.</title>
        <authorList>
            <person name="Jankowitsch F."/>
            <person name="Schwarz J."/>
            <person name="Ruckert C."/>
            <person name="Gust B."/>
            <person name="Szczepanowski R."/>
            <person name="Blom J."/>
            <person name="Pelzer S."/>
            <person name="Kalinowski J."/>
            <person name="Mack M."/>
        </authorList>
    </citation>
    <scope>NUCLEOTIDE SEQUENCE [LARGE SCALE GENOMIC DNA]</scope>
    <source>
        <strain>DSM 101723 / JCM 4913 / KCC S-0913 / 768</strain>
    </source>
</reference>
<reference key="2">
    <citation type="journal article" date="2018" name="J. Antibiot.">
        <title>Novel desferrioxamine derivatives synthesized using the secondary metabolism-specific nitrous acid biosynthetic pathway in Streptomyces davawensis.</title>
        <authorList>
            <person name="Hagihara R."/>
            <person name="Katsuyama Y."/>
            <person name="Sugai Y."/>
            <person name="Onaka H."/>
            <person name="Ohnishi Y."/>
        </authorList>
    </citation>
    <scope>FUNCTION</scope>
    <scope>CATALYTIC ACTIVITY</scope>
    <scope>COFACTOR</scope>
    <source>
        <strain>DSM 101723 / JCM 4913 / KCC S-0913 / 768</strain>
    </source>
</reference>
<keyword id="KW-0503">Monooxygenase</keyword>
<keyword id="KW-0521">NADP</keyword>
<keyword id="KW-0560">Oxidoreductase</keyword>
<keyword id="KW-1185">Reference proteome</keyword>
<dbReference type="EC" id="1.14.13.248" evidence="1"/>
<dbReference type="EMBL" id="HE971709">
    <property type="protein sequence ID" value="CCK28801.1"/>
    <property type="molecule type" value="Genomic_DNA"/>
</dbReference>
<dbReference type="RefSeq" id="WP_015659149.1">
    <property type="nucleotide sequence ID" value="NC_020504.1"/>
</dbReference>
<dbReference type="SMR" id="K4QXN8"/>
<dbReference type="STRING" id="1214101.BN159_4422"/>
<dbReference type="KEGG" id="sdv:BN159_4422"/>
<dbReference type="PATRIC" id="fig|1214101.3.peg.4475"/>
<dbReference type="eggNOG" id="COG4529">
    <property type="taxonomic scope" value="Bacteria"/>
</dbReference>
<dbReference type="HOGENOM" id="CLU_016297_0_0_11"/>
<dbReference type="OrthoDB" id="3653265at2"/>
<dbReference type="Proteomes" id="UP000008043">
    <property type="component" value="Chromosome"/>
</dbReference>
<dbReference type="GO" id="GO:0004497">
    <property type="term" value="F:monooxygenase activity"/>
    <property type="evidence" value="ECO:0007669"/>
    <property type="project" value="UniProtKB-KW"/>
</dbReference>
<dbReference type="InterPro" id="IPR036188">
    <property type="entry name" value="FAD/NAD-bd_sf"/>
</dbReference>
<dbReference type="InterPro" id="IPR038732">
    <property type="entry name" value="HpyO/CreE_NAD-binding"/>
</dbReference>
<dbReference type="InterPro" id="IPR052189">
    <property type="entry name" value="L-asp_N-monooxygenase_NS-form"/>
</dbReference>
<dbReference type="PANTHER" id="PTHR40254">
    <property type="entry name" value="BLR0577 PROTEIN"/>
    <property type="match status" value="1"/>
</dbReference>
<dbReference type="PANTHER" id="PTHR40254:SF1">
    <property type="entry name" value="BLR0577 PROTEIN"/>
    <property type="match status" value="1"/>
</dbReference>
<dbReference type="Pfam" id="PF13454">
    <property type="entry name" value="NAD_binding_9"/>
    <property type="match status" value="1"/>
</dbReference>
<dbReference type="SUPFAM" id="SSF51905">
    <property type="entry name" value="FAD/NAD(P)-binding domain"/>
    <property type="match status" value="1"/>
</dbReference>
<sequence>MTTRQHTVCVIGAGPRGLSVIERLCAAARAAAPDTAIGIHVVDPHAPGAGQVWRTSQSAHLLMNTVAGQISVFTDASVELTGPLEPGPSLHAWAEALLAGDIPGHYPDQVLDEARALGPDTYPTRAFYGHYLRWAFDRTVAGAPDCVTVTWHRSRAVALDDEAVALATGHPPRQRVTLEDGEVLEHLDAVVLSQGHLPARPTAVEEQFAALAREHGHTHLPPANPADTELECVQPGQPVLLRGLGLNFFDYMALLTTGRGGSFTRVYGRLVYLPSGREPRMYAGSRRGVPYQARGENEKGPHGRHEPLLLTPARIARLQAARGTDGADFQRDVWPLVAKEVETVYYRTLLTARGRGDRAESFQRAFLRALPGTSAEETVLDAYEIGEKDRWDWDRLSRPYQDQEFGSPEDFTAWLLDHLREDVAEARSGNVSGPLKAALDVLRDLRNEIRLVVDHGGLHGDSHREHLDRWYTPLNAFLSIGPPASRIEEAAALIEAGVLHIIGPDLRVDVDRQGFHAHSPLVPGSRISAEVLIEARLPDITLSRTEDPLLRRLLDSGQCATHRIATRNGTWIYTEGVAVTPRPFQLLDAARRPHPRRYAFGVPTESVHWVTAAGIRPGVNSVTLTDSDAIAQAALGAVLEQRDSLERTAA</sequence>